<gene>
    <name type="primary">ST7</name>
    <name type="synonym">FAM4A1</name>
    <name type="synonym">HELG</name>
    <name type="synonym">RAY1</name>
</gene>
<keyword id="KW-0025">Alternative splicing</keyword>
<keyword id="KW-0325">Glycoprotein</keyword>
<keyword id="KW-0472">Membrane</keyword>
<keyword id="KW-0597">Phosphoprotein</keyword>
<keyword id="KW-1267">Proteomics identification</keyword>
<keyword id="KW-1185">Reference proteome</keyword>
<keyword id="KW-0812">Transmembrane</keyword>
<keyword id="KW-1133">Transmembrane helix</keyword>
<evidence type="ECO:0000255" key="1"/>
<evidence type="ECO:0000269" key="2">
    <source>
    </source>
</evidence>
<evidence type="ECO:0000269" key="3">
    <source>
    </source>
</evidence>
<evidence type="ECO:0000269" key="4">
    <source>
    </source>
</evidence>
<evidence type="ECO:0000269" key="5">
    <source>
    </source>
</evidence>
<evidence type="ECO:0000269" key="6">
    <source>
    </source>
</evidence>
<evidence type="ECO:0000303" key="7">
    <source>
    </source>
</evidence>
<evidence type="ECO:0000303" key="8">
    <source>
    </source>
</evidence>
<evidence type="ECO:0000303" key="9">
    <source>
    </source>
</evidence>
<evidence type="ECO:0000303" key="10">
    <source>
    </source>
</evidence>
<evidence type="ECO:0000303" key="11">
    <source>
    </source>
</evidence>
<evidence type="ECO:0000303" key="12">
    <source>
    </source>
</evidence>
<evidence type="ECO:0000303" key="13">
    <source ref="8"/>
</evidence>
<evidence type="ECO:0000305" key="14"/>
<evidence type="ECO:0007744" key="15">
    <source>
    </source>
</evidence>
<name>ST7_HUMAN</name>
<comment type="function">
    <text evidence="6">May act as a tumor suppressor.</text>
</comment>
<comment type="interaction">
    <interactant intactId="EBI-3911844">
        <id>Q9NRC1</id>
    </interactant>
    <interactant intactId="EBI-2559135">
        <id>Q8WV16</id>
        <label>DCAF4</label>
    </interactant>
    <organismsDiffer>false</organismsDiffer>
    <experiments>3</experiments>
</comment>
<comment type="subcellular location">
    <subcellularLocation>
        <location evidence="14">Membrane</location>
        <topology evidence="14">Multi-pass membrane protein</topology>
    </subcellularLocation>
</comment>
<comment type="alternative products">
    <event type="alternative splicing"/>
    <isoform>
        <id>Q9NRC1-1</id>
        <name>1</name>
        <sequence type="displayed"/>
    </isoform>
    <isoform>
        <id>Q9NRC1-2</id>
        <name>2</name>
        <sequence type="described" ref="VSP_034113 VSP_034117"/>
    </isoform>
    <isoform>
        <id>Q9NRC1-3</id>
        <name>3</name>
        <sequence type="described" ref="VSP_034112 VSP_034113 VSP_034117"/>
    </isoform>
    <isoform>
        <id>Q9NRC1-4</id>
        <name>4</name>
        <sequence type="described" ref="VSP_034109 VSP_034110 VSP_034117"/>
    </isoform>
    <isoform>
        <id>Q9NRC1-5</id>
        <name>5</name>
        <sequence type="described" ref="VSP_034109 VSP_034110 VSP_034113 VSP_034117"/>
    </isoform>
    <isoform>
        <id>Q9NRC1-6</id>
        <name>6</name>
        <sequence type="described" ref="VSP_034108 VSP_034111 VSP_034113 VSP_034116 VSP_034117"/>
    </isoform>
    <isoform>
        <id>Q9NRC1-7</id>
        <name>7</name>
        <sequence type="described" ref="VSP_034113 VSP_034114 VSP_034115"/>
    </isoform>
</comment>
<comment type="tissue specificity">
    <text evidence="2 3">Ubiquitously expressed, with highest levels in heart, liver and pancreas.</text>
</comment>
<comment type="similarity">
    <text evidence="14">Belongs to the ST7 family.</text>
</comment>
<comment type="sequence caution" evidence="14">
    <conflict type="erroneous initiation">
        <sequence resource="EMBL-CDS" id="CAB86869"/>
    </conflict>
</comment>
<comment type="sequence caution" evidence="14">
    <conflict type="erroneous gene model prediction">
        <sequence resource="EMBL-CDS" id="EAW83520"/>
    </conflict>
</comment>
<proteinExistence type="evidence at protein level"/>
<feature type="chain" id="PRO_0000339202" description="Suppressor of tumorigenicity 7 protein">
    <location>
        <begin position="1"/>
        <end position="585"/>
    </location>
</feature>
<feature type="transmembrane region" description="Helical" evidence="1">
    <location>
        <begin position="15"/>
        <end position="35"/>
    </location>
</feature>
<feature type="transmembrane region" description="Helical" evidence="1">
    <location>
        <begin position="62"/>
        <end position="82"/>
    </location>
</feature>
<feature type="transmembrane region" description="Helical" evidence="1">
    <location>
        <begin position="512"/>
        <end position="532"/>
    </location>
</feature>
<feature type="modified residue" description="Phosphoserine" evidence="15">
    <location>
        <position position="386"/>
    </location>
</feature>
<feature type="glycosylation site" description="N-linked (GlcNAc...) asparagine" evidence="1">
    <location>
        <position position="47"/>
    </location>
</feature>
<feature type="splice variant" id="VSP_034108" description="In isoform 6." evidence="10">
    <location>
        <begin position="1"/>
        <end position="50"/>
    </location>
</feature>
<feature type="splice variant" id="VSP_034109" description="In isoform 4 and isoform 5." evidence="8">
    <location>
        <begin position="1"/>
        <end position="26"/>
    </location>
</feature>
<feature type="splice variant" id="VSP_034110" description="In isoform 4 and isoform 5." evidence="8">
    <original>WFFIVLFLVYILRVPLKINDNLST</original>
    <variation>MFGTESS</variation>
    <location>
        <begin position="27"/>
        <end position="50"/>
    </location>
</feature>
<feature type="splice variant" id="VSP_034111" description="In isoform 6." evidence="10">
    <original>V</original>
    <variation>M</variation>
    <location>
        <position position="51"/>
    </location>
</feature>
<feature type="splice variant" id="VSP_034112" description="In isoform 3." evidence="11">
    <location>
        <begin position="116"/>
        <end position="122"/>
    </location>
</feature>
<feature type="splice variant" id="VSP_034113" description="In isoform 2, isoform 3, isoform 5, isoform 6 and isoform 7." evidence="7 8 9 10 11 12 13">
    <location>
        <begin position="215"/>
        <end position="237"/>
    </location>
</feature>
<feature type="splice variant" id="VSP_034114" description="In isoform 7." evidence="9">
    <original>YLLE</original>
    <variation>ARWK</variation>
    <location>
        <begin position="419"/>
        <end position="422"/>
    </location>
</feature>
<feature type="splice variant" id="VSP_034115" description="In isoform 7." evidence="9">
    <location>
        <begin position="423"/>
        <end position="585"/>
    </location>
</feature>
<feature type="splice variant" id="VSP_034116" description="In isoform 6." evidence="10">
    <original>CTWEGT</original>
    <variation>S</variation>
    <location>
        <begin position="464"/>
        <end position="469"/>
    </location>
</feature>
<feature type="splice variant" id="VSP_034117" description="In isoform 2, isoform 3, isoform 4, isoform 5 and isoform 6." evidence="7 8 10 11 12 13">
    <original>MIDIFCSAEFRDWNCKSIFMRVEDELEIPPAPQSQHFQN</original>
    <variation>FLSTLFAPLNFVMEKVESILPSSLWHQLTRI</variation>
    <location>
        <begin position="547"/>
        <end position="585"/>
    </location>
</feature>
<feature type="sequence variant" id="VAR_043932" description="In dbSNP:rs201219065." evidence="4">
    <original>A</original>
    <variation>T</variation>
    <location>
        <position position="186"/>
    </location>
</feature>
<feature type="sequence variant" id="VAR_043933" description="In dbSNP:rs1362000016." evidence="5">
    <original>I</original>
    <variation>V</variation>
    <location>
        <position position="361"/>
    </location>
</feature>
<accession>Q9NRC1</accession>
<accession>A4D0V2</accession>
<accession>Q5CZ72</accession>
<accession>Q7LE31</accession>
<accession>Q7LE32</accession>
<accession>Q8NA32</accession>
<accession>Q8NEJ8</accession>
<accession>Q8TDI9</accession>
<accession>Q9BWX3</accession>
<accession>Q9BWX4</accession>
<accession>Q9NRC2</accession>
<accession>Q9NXZ7</accession>
<protein>
    <recommendedName>
        <fullName>Suppressor of tumorigenicity 7 protein</fullName>
    </recommendedName>
    <alternativeName>
        <fullName>Protein FAM4A1</fullName>
    </alternativeName>
    <alternativeName>
        <fullName>Protein HELG</fullName>
    </alternativeName>
</protein>
<sequence>MAEAATGFLEQLKSCIVWSWTYLWTVWFFIVLFLVYILRVPLKINDNLSTVSMFLNTLTPKFYVALTGTSSLISGLILIFEWWYFRKYGTSFIEQVSVSHLRPLLGGVDNNSSNNSNSSNGDSDSNRQSVSECKVWRNPLNLFRGAEYNRYTWVTGREPLTYYDMNLSAQDHQTFFTCDSDHLRPADAIMQKAWRERNPQARISAAHEALEINEIRSRVEVPLIASSTIWEIKLLPKCATAYILLAEEEATTIAEAEKLFKQALKAGDGCYRRSQQLQHHGSQYEAQHRRDTNVLVYIKRRLAMCARRLGRTREAVKMMRDLMKEFPLLSMFNIHENLLEALLELQAYADVQAVLAKYDDISLPKSATICYTAALLKARAVSDKFSPEAASRRGLSTAEMNAVEAIHRAVEFNPHVPKYLLEMKSLILPPEHILKRGDSEAIAYAFFHLAHWKRVEGALNLLHCTWEGTFRMIPYPLEKGHLFYPYPICTETADRELLPSFHEVSVYPKKELPFFILFTAGLCSFTAMLALLTHQFPELMGVFAKAMIDIFCSAEFRDWNCKSIFMRVEDELEIPPAPQSQHFQN</sequence>
<dbReference type="EMBL" id="AF234882">
    <property type="protein sequence ID" value="AAF85945.1"/>
    <property type="molecule type" value="mRNA"/>
</dbReference>
<dbReference type="EMBL" id="AF234883">
    <property type="protein sequence ID" value="AAF85946.1"/>
    <property type="molecule type" value="mRNA"/>
</dbReference>
<dbReference type="EMBL" id="AY009152">
    <property type="protein sequence ID" value="AAG37720.1"/>
    <property type="molecule type" value="mRNA"/>
</dbReference>
<dbReference type="EMBL" id="AY009153">
    <property type="protein sequence ID" value="AAG37721.1"/>
    <property type="molecule type" value="mRNA"/>
</dbReference>
<dbReference type="EMBL" id="AK093212">
    <property type="protein sequence ID" value="BAC04097.1"/>
    <property type="molecule type" value="mRNA"/>
</dbReference>
<dbReference type="EMBL" id="CH236947">
    <property type="protein sequence ID" value="EAL24356.1"/>
    <property type="molecule type" value="Genomic_DNA"/>
</dbReference>
<dbReference type="EMBL" id="CH236947">
    <property type="protein sequence ID" value="EAL24357.1"/>
    <property type="molecule type" value="Genomic_DNA"/>
</dbReference>
<dbReference type="EMBL" id="AC002542">
    <property type="protein sequence ID" value="AAS07414.1"/>
    <property type="molecule type" value="Genomic_DNA"/>
</dbReference>
<dbReference type="EMBL" id="AC002542">
    <property type="protein sequence ID" value="AAS07415.1"/>
    <property type="molecule type" value="Genomic_DNA"/>
</dbReference>
<dbReference type="EMBL" id="CH471070">
    <property type="protein sequence ID" value="EAW83520.1"/>
    <property type="status" value="ALT_SEQ"/>
    <property type="molecule type" value="Genomic_DNA"/>
</dbReference>
<dbReference type="EMBL" id="BC030954">
    <property type="protein sequence ID" value="AAH30954.1"/>
    <property type="molecule type" value="mRNA"/>
</dbReference>
<dbReference type="EMBL" id="BC075855">
    <property type="protein sequence ID" value="AAH75855.1"/>
    <property type="molecule type" value="mRNA"/>
</dbReference>
<dbReference type="EMBL" id="AF415174">
    <property type="protein sequence ID" value="AAL85662.1"/>
    <property type="molecule type" value="mRNA"/>
</dbReference>
<dbReference type="EMBL" id="CR936656">
    <property type="protein sequence ID" value="CAI56794.1"/>
    <property type="molecule type" value="mRNA"/>
</dbReference>
<dbReference type="EMBL" id="AJ277291">
    <property type="protein sequence ID" value="CAB86869.1"/>
    <property type="status" value="ALT_INIT"/>
    <property type="molecule type" value="mRNA"/>
</dbReference>
<dbReference type="CCDS" id="CCDS5769.1">
    <molecule id="Q9NRC1-2"/>
</dbReference>
<dbReference type="CCDS" id="CCDS5770.1">
    <molecule id="Q9NRC1-1"/>
</dbReference>
<dbReference type="PIR" id="T50625">
    <property type="entry name" value="T50625"/>
</dbReference>
<dbReference type="RefSeq" id="NP_060882.2">
    <molecule id="Q9NRC1-2"/>
    <property type="nucleotide sequence ID" value="NM_018412.3"/>
</dbReference>
<dbReference type="RefSeq" id="NP_068708.1">
    <molecule id="Q9NRC1-1"/>
    <property type="nucleotide sequence ID" value="NM_021908.3"/>
</dbReference>
<dbReference type="BioGRID" id="113695">
    <property type="interactions" value="378"/>
</dbReference>
<dbReference type="FunCoup" id="Q9NRC1">
    <property type="interactions" value="1397"/>
</dbReference>
<dbReference type="IntAct" id="Q9NRC1">
    <property type="interactions" value="96"/>
</dbReference>
<dbReference type="MINT" id="Q9NRC1"/>
<dbReference type="STRING" id="9606.ENSP00000265437"/>
<dbReference type="GlyCosmos" id="Q9NRC1">
    <property type="glycosylation" value="1 site, No reported glycans"/>
</dbReference>
<dbReference type="GlyGen" id="Q9NRC1">
    <property type="glycosylation" value="1 site"/>
</dbReference>
<dbReference type="iPTMnet" id="Q9NRC1"/>
<dbReference type="PhosphoSitePlus" id="Q9NRC1"/>
<dbReference type="SwissPalm" id="Q9NRC1"/>
<dbReference type="BioMuta" id="ST7"/>
<dbReference type="DMDM" id="74734319"/>
<dbReference type="jPOST" id="Q9NRC1"/>
<dbReference type="MassIVE" id="Q9NRC1"/>
<dbReference type="PaxDb" id="9606-ENSP00000265437"/>
<dbReference type="PeptideAtlas" id="Q9NRC1"/>
<dbReference type="ProteomicsDB" id="82326">
    <molecule id="Q9NRC1-1"/>
</dbReference>
<dbReference type="ProteomicsDB" id="82327">
    <molecule id="Q9NRC1-2"/>
</dbReference>
<dbReference type="ProteomicsDB" id="82328">
    <molecule id="Q9NRC1-3"/>
</dbReference>
<dbReference type="ProteomicsDB" id="82329">
    <molecule id="Q9NRC1-4"/>
</dbReference>
<dbReference type="ProteomicsDB" id="82330">
    <molecule id="Q9NRC1-5"/>
</dbReference>
<dbReference type="ProteomicsDB" id="82331">
    <molecule id="Q9NRC1-6"/>
</dbReference>
<dbReference type="ProteomicsDB" id="82332">
    <molecule id="Q9NRC1-7"/>
</dbReference>
<dbReference type="Pumba" id="Q9NRC1"/>
<dbReference type="TopDownProteomics" id="Q9NRC1-1">
    <molecule id="Q9NRC1-1"/>
</dbReference>
<dbReference type="Antibodypedia" id="31620">
    <property type="antibodies" value="130 antibodies from 25 providers"/>
</dbReference>
<dbReference type="DNASU" id="7982"/>
<dbReference type="Ensembl" id="ENST00000265437.9">
    <molecule id="Q9NRC1-1"/>
    <property type="protein sequence ID" value="ENSP00000265437.5"/>
    <property type="gene ID" value="ENSG00000004866.22"/>
</dbReference>
<dbReference type="Ensembl" id="ENST00000393443.5">
    <molecule id="Q9NRC1-6"/>
    <property type="protein sequence ID" value="ENSP00000377089.1"/>
    <property type="gene ID" value="ENSG00000004866.22"/>
</dbReference>
<dbReference type="Ensembl" id="ENST00000393451.7">
    <molecule id="Q9NRC1-2"/>
    <property type="protein sequence ID" value="ENSP00000377097.3"/>
    <property type="gene ID" value="ENSG00000004866.22"/>
</dbReference>
<dbReference type="GeneID" id="7982"/>
<dbReference type="KEGG" id="hsa:7982"/>
<dbReference type="UCSC" id="uc003vio.4">
    <molecule id="Q9NRC1-1"/>
    <property type="organism name" value="human"/>
</dbReference>
<dbReference type="AGR" id="HGNC:11351"/>
<dbReference type="CTD" id="7982"/>
<dbReference type="DisGeNET" id="7982"/>
<dbReference type="GeneCards" id="ST7"/>
<dbReference type="HGNC" id="HGNC:11351">
    <property type="gene designation" value="ST7"/>
</dbReference>
<dbReference type="HPA" id="ENSG00000004866">
    <property type="expression patterns" value="Low tissue specificity"/>
</dbReference>
<dbReference type="MalaCards" id="ST7"/>
<dbReference type="MIM" id="600833">
    <property type="type" value="gene"/>
</dbReference>
<dbReference type="neXtProt" id="NX_Q9NRC1"/>
<dbReference type="OpenTargets" id="ENSG00000004866"/>
<dbReference type="PharmGKB" id="PA36173"/>
<dbReference type="VEuPathDB" id="HostDB:ENSG00000004866"/>
<dbReference type="eggNOG" id="KOG3807">
    <property type="taxonomic scope" value="Eukaryota"/>
</dbReference>
<dbReference type="GeneTree" id="ENSGT00390000000873"/>
<dbReference type="InParanoid" id="Q9NRC1"/>
<dbReference type="OMA" id="DRCATAY"/>
<dbReference type="OrthoDB" id="5914722at2759"/>
<dbReference type="PAN-GO" id="Q9NRC1">
    <property type="GO annotations" value="0 GO annotations based on evolutionary models"/>
</dbReference>
<dbReference type="PhylomeDB" id="Q9NRC1"/>
<dbReference type="TreeFam" id="TF314162"/>
<dbReference type="PathwayCommons" id="Q9NRC1"/>
<dbReference type="SignaLink" id="Q9NRC1"/>
<dbReference type="SIGNOR" id="Q9NRC1"/>
<dbReference type="BioGRID-ORCS" id="7982">
    <property type="hits" value="12 hits in 1151 CRISPR screens"/>
</dbReference>
<dbReference type="CD-CODE" id="232F8A39">
    <property type="entry name" value="P-body"/>
</dbReference>
<dbReference type="CD-CODE" id="DEE660B4">
    <property type="entry name" value="Stress granule"/>
</dbReference>
<dbReference type="ChiTaRS" id="ST7">
    <property type="organism name" value="human"/>
</dbReference>
<dbReference type="GeneWiki" id="ST7"/>
<dbReference type="GenomeRNAi" id="7982"/>
<dbReference type="Pharos" id="Q9NRC1">
    <property type="development level" value="Tbio"/>
</dbReference>
<dbReference type="PRO" id="PR:Q9NRC1"/>
<dbReference type="Proteomes" id="UP000005640">
    <property type="component" value="Chromosome 7"/>
</dbReference>
<dbReference type="RNAct" id="Q9NRC1">
    <property type="molecule type" value="protein"/>
</dbReference>
<dbReference type="Bgee" id="ENSG00000004866">
    <property type="expression patterns" value="Expressed in cortical plate and 195 other cell types or tissues"/>
</dbReference>
<dbReference type="ExpressionAtlas" id="Q9NRC1">
    <property type="expression patterns" value="baseline and differential"/>
</dbReference>
<dbReference type="GO" id="GO:0016020">
    <property type="term" value="C:membrane"/>
    <property type="evidence" value="ECO:0007669"/>
    <property type="project" value="UniProtKB-SubCell"/>
</dbReference>
<dbReference type="GO" id="GO:0030198">
    <property type="term" value="P:extracellular matrix organization"/>
    <property type="evidence" value="ECO:0000303"/>
    <property type="project" value="BHF-UCL"/>
</dbReference>
<dbReference type="GO" id="GO:0045595">
    <property type="term" value="P:regulation of cell differentiation"/>
    <property type="evidence" value="ECO:0000303"/>
    <property type="project" value="BHF-UCL"/>
</dbReference>
<dbReference type="CDD" id="cd11557">
    <property type="entry name" value="ST7"/>
    <property type="match status" value="1"/>
</dbReference>
<dbReference type="InterPro" id="IPR007311">
    <property type="entry name" value="ST7"/>
</dbReference>
<dbReference type="PANTHER" id="PTHR12745">
    <property type="entry name" value="SUPPRESSION OF TUMORIGENICITY 7"/>
    <property type="match status" value="1"/>
</dbReference>
<dbReference type="PANTHER" id="PTHR12745:SF10">
    <property type="entry name" value="SUPPRESSOR OF TUMORIGENICITY 7 PROTEIN"/>
    <property type="match status" value="1"/>
</dbReference>
<dbReference type="Pfam" id="PF04184">
    <property type="entry name" value="ST7"/>
    <property type="match status" value="1"/>
</dbReference>
<reference key="1">
    <citation type="journal article" date="2000" name="Am. J. Hum. Genet.">
        <title>Identification of a novel gene on chromosome 7q31 that is interrupted by a translocation breakpoint in an autistic individual.</title>
        <authorList>
            <person name="Vincent J.B."/>
            <person name="Herbrick J.-A."/>
            <person name="Gurling H.M.D."/>
            <person name="Bolton P.F."/>
            <person name="Roberts W."/>
            <person name="Scherer S.W."/>
        </authorList>
    </citation>
    <scope>NUCLEOTIDE SEQUENCE [MRNA] (ISOFORMS 1 AND 2)</scope>
    <scope>TISSUE SPECIFICITY</scope>
</reference>
<reference key="2">
    <citation type="journal article" date="2001" name="Nat. Genet.">
        <title>Mutational and functional analyses reveal that ST7 is a highly conserved tumor-suppressor gene on human chromosome 7q31.</title>
        <authorList>
            <person name="Zenklusen J.C."/>
            <person name="Conti C.J."/>
            <person name="Green E.D."/>
        </authorList>
    </citation>
    <scope>NUCLEOTIDE SEQUENCE [MRNA] (ISOFORMS 4 AND 5)</scope>
    <scope>TISSUE SPECIFICITY</scope>
</reference>
<reference key="3">
    <citation type="journal article" date="2004" name="Nat. Genet.">
        <title>Complete sequencing and characterization of 21,243 full-length human cDNAs.</title>
        <authorList>
            <person name="Ota T."/>
            <person name="Suzuki Y."/>
            <person name="Nishikawa T."/>
            <person name="Otsuki T."/>
            <person name="Sugiyama T."/>
            <person name="Irie R."/>
            <person name="Wakamatsu A."/>
            <person name="Hayashi K."/>
            <person name="Sato H."/>
            <person name="Nagai K."/>
            <person name="Kimura K."/>
            <person name="Makita H."/>
            <person name="Sekine M."/>
            <person name="Obayashi M."/>
            <person name="Nishi T."/>
            <person name="Shibahara T."/>
            <person name="Tanaka T."/>
            <person name="Ishii S."/>
            <person name="Yamamoto J."/>
            <person name="Saito K."/>
            <person name="Kawai Y."/>
            <person name="Isono Y."/>
            <person name="Nakamura Y."/>
            <person name="Nagahari K."/>
            <person name="Murakami K."/>
            <person name="Yasuda T."/>
            <person name="Iwayanagi T."/>
            <person name="Wagatsuma M."/>
            <person name="Shiratori A."/>
            <person name="Sudo H."/>
            <person name="Hosoiri T."/>
            <person name="Kaku Y."/>
            <person name="Kodaira H."/>
            <person name="Kondo H."/>
            <person name="Sugawara M."/>
            <person name="Takahashi M."/>
            <person name="Kanda K."/>
            <person name="Yokoi T."/>
            <person name="Furuya T."/>
            <person name="Kikkawa E."/>
            <person name="Omura Y."/>
            <person name="Abe K."/>
            <person name="Kamihara K."/>
            <person name="Katsuta N."/>
            <person name="Sato K."/>
            <person name="Tanikawa M."/>
            <person name="Yamazaki M."/>
            <person name="Ninomiya K."/>
            <person name="Ishibashi T."/>
            <person name="Yamashita H."/>
            <person name="Murakawa K."/>
            <person name="Fujimori K."/>
            <person name="Tanai H."/>
            <person name="Kimata M."/>
            <person name="Watanabe M."/>
            <person name="Hiraoka S."/>
            <person name="Chiba Y."/>
            <person name="Ishida S."/>
            <person name="Ono Y."/>
            <person name="Takiguchi S."/>
            <person name="Watanabe S."/>
            <person name="Yosida M."/>
            <person name="Hotuta T."/>
            <person name="Kusano J."/>
            <person name="Kanehori K."/>
            <person name="Takahashi-Fujii A."/>
            <person name="Hara H."/>
            <person name="Tanase T.-O."/>
            <person name="Nomura Y."/>
            <person name="Togiya S."/>
            <person name="Komai F."/>
            <person name="Hara R."/>
            <person name="Takeuchi K."/>
            <person name="Arita M."/>
            <person name="Imose N."/>
            <person name="Musashino K."/>
            <person name="Yuuki H."/>
            <person name="Oshima A."/>
            <person name="Sasaki N."/>
            <person name="Aotsuka S."/>
            <person name="Yoshikawa Y."/>
            <person name="Matsunawa H."/>
            <person name="Ichihara T."/>
            <person name="Shiohata N."/>
            <person name="Sano S."/>
            <person name="Moriya S."/>
            <person name="Momiyama H."/>
            <person name="Satoh N."/>
            <person name="Takami S."/>
            <person name="Terashima Y."/>
            <person name="Suzuki O."/>
            <person name="Nakagawa S."/>
            <person name="Senoh A."/>
            <person name="Mizoguchi H."/>
            <person name="Goto Y."/>
            <person name="Shimizu F."/>
            <person name="Wakebe H."/>
            <person name="Hishigaki H."/>
            <person name="Watanabe T."/>
            <person name="Sugiyama A."/>
            <person name="Takemoto M."/>
            <person name="Kawakami B."/>
            <person name="Yamazaki M."/>
            <person name="Watanabe K."/>
            <person name="Kumagai A."/>
            <person name="Itakura S."/>
            <person name="Fukuzumi Y."/>
            <person name="Fujimori Y."/>
            <person name="Komiyama M."/>
            <person name="Tashiro H."/>
            <person name="Tanigami A."/>
            <person name="Fujiwara T."/>
            <person name="Ono T."/>
            <person name="Yamada K."/>
            <person name="Fujii Y."/>
            <person name="Ozaki K."/>
            <person name="Hirao M."/>
            <person name="Ohmori Y."/>
            <person name="Kawabata A."/>
            <person name="Hikiji T."/>
            <person name="Kobatake N."/>
            <person name="Inagaki H."/>
            <person name="Ikema Y."/>
            <person name="Okamoto S."/>
            <person name="Okitani R."/>
            <person name="Kawakami T."/>
            <person name="Noguchi S."/>
            <person name="Itoh T."/>
            <person name="Shigeta K."/>
            <person name="Senba T."/>
            <person name="Matsumura K."/>
            <person name="Nakajima Y."/>
            <person name="Mizuno T."/>
            <person name="Morinaga M."/>
            <person name="Sasaki M."/>
            <person name="Togashi T."/>
            <person name="Oyama M."/>
            <person name="Hata H."/>
            <person name="Watanabe M."/>
            <person name="Komatsu T."/>
            <person name="Mizushima-Sugano J."/>
            <person name="Satoh T."/>
            <person name="Shirai Y."/>
            <person name="Takahashi Y."/>
            <person name="Nakagawa K."/>
            <person name="Okumura K."/>
            <person name="Nagase T."/>
            <person name="Nomura N."/>
            <person name="Kikuchi H."/>
            <person name="Masuho Y."/>
            <person name="Yamashita R."/>
            <person name="Nakai K."/>
            <person name="Yada T."/>
            <person name="Nakamura Y."/>
            <person name="Ohara O."/>
            <person name="Isogai T."/>
            <person name="Sugano S."/>
        </authorList>
    </citation>
    <scope>NUCLEOTIDE SEQUENCE [LARGE SCALE MRNA] (ISOFORM 6)</scope>
    <source>
        <tissue>Testis</tissue>
    </source>
</reference>
<reference key="4">
    <citation type="journal article" date="2003" name="Nature">
        <title>The DNA sequence of human chromosome 7.</title>
        <authorList>
            <person name="Hillier L.W."/>
            <person name="Fulton R.S."/>
            <person name="Fulton L.A."/>
            <person name="Graves T.A."/>
            <person name="Pepin K.H."/>
            <person name="Wagner-McPherson C."/>
            <person name="Layman D."/>
            <person name="Maas J."/>
            <person name="Jaeger S."/>
            <person name="Walker R."/>
            <person name="Wylie K."/>
            <person name="Sekhon M."/>
            <person name="Becker M.C."/>
            <person name="O'Laughlin M.D."/>
            <person name="Schaller M.E."/>
            <person name="Fewell G.A."/>
            <person name="Delehaunty K.D."/>
            <person name="Miner T.L."/>
            <person name="Nash W.E."/>
            <person name="Cordes M."/>
            <person name="Du H."/>
            <person name="Sun H."/>
            <person name="Edwards J."/>
            <person name="Bradshaw-Cordum H."/>
            <person name="Ali J."/>
            <person name="Andrews S."/>
            <person name="Isak A."/>
            <person name="Vanbrunt A."/>
            <person name="Nguyen C."/>
            <person name="Du F."/>
            <person name="Lamar B."/>
            <person name="Courtney L."/>
            <person name="Kalicki J."/>
            <person name="Ozersky P."/>
            <person name="Bielicki L."/>
            <person name="Scott K."/>
            <person name="Holmes A."/>
            <person name="Harkins R."/>
            <person name="Harris A."/>
            <person name="Strong C.M."/>
            <person name="Hou S."/>
            <person name="Tomlinson C."/>
            <person name="Dauphin-Kohlberg S."/>
            <person name="Kozlowicz-Reilly A."/>
            <person name="Leonard S."/>
            <person name="Rohlfing T."/>
            <person name="Rock S.M."/>
            <person name="Tin-Wollam A.-M."/>
            <person name="Abbott A."/>
            <person name="Minx P."/>
            <person name="Maupin R."/>
            <person name="Strowmatt C."/>
            <person name="Latreille P."/>
            <person name="Miller N."/>
            <person name="Johnson D."/>
            <person name="Murray J."/>
            <person name="Woessner J.P."/>
            <person name="Wendl M.C."/>
            <person name="Yang S.-P."/>
            <person name="Schultz B.R."/>
            <person name="Wallis J.W."/>
            <person name="Spieth J."/>
            <person name="Bieri T.A."/>
            <person name="Nelson J.O."/>
            <person name="Berkowicz N."/>
            <person name="Wohldmann P.E."/>
            <person name="Cook L.L."/>
            <person name="Hickenbotham M.T."/>
            <person name="Eldred J."/>
            <person name="Williams D."/>
            <person name="Bedell J.A."/>
            <person name="Mardis E.R."/>
            <person name="Clifton S.W."/>
            <person name="Chissoe S.L."/>
            <person name="Marra M.A."/>
            <person name="Raymond C."/>
            <person name="Haugen E."/>
            <person name="Gillett W."/>
            <person name="Zhou Y."/>
            <person name="James R."/>
            <person name="Phelps K."/>
            <person name="Iadanoto S."/>
            <person name="Bubb K."/>
            <person name="Simms E."/>
            <person name="Levy R."/>
            <person name="Clendenning J."/>
            <person name="Kaul R."/>
            <person name="Kent W.J."/>
            <person name="Furey T.S."/>
            <person name="Baertsch R.A."/>
            <person name="Brent M.R."/>
            <person name="Keibler E."/>
            <person name="Flicek P."/>
            <person name="Bork P."/>
            <person name="Suyama M."/>
            <person name="Bailey J.A."/>
            <person name="Portnoy M.E."/>
            <person name="Torrents D."/>
            <person name="Chinwalla A.T."/>
            <person name="Gish W.R."/>
            <person name="Eddy S.R."/>
            <person name="McPherson J.D."/>
            <person name="Olson M.V."/>
            <person name="Eichler E.E."/>
            <person name="Green E.D."/>
            <person name="Waterston R.H."/>
            <person name="Wilson R.K."/>
        </authorList>
    </citation>
    <scope>NUCLEOTIDE SEQUENCE [LARGE SCALE GENOMIC DNA]</scope>
</reference>
<reference key="5">
    <citation type="journal article" date="2003" name="Science">
        <title>Human chromosome 7: DNA sequence and biology.</title>
        <authorList>
            <person name="Scherer S.W."/>
            <person name="Cheung J."/>
            <person name="MacDonald J.R."/>
            <person name="Osborne L.R."/>
            <person name="Nakabayashi K."/>
            <person name="Herbrick J.-A."/>
            <person name="Carson A.R."/>
            <person name="Parker-Katiraee L."/>
            <person name="Skaug J."/>
            <person name="Khaja R."/>
            <person name="Zhang J."/>
            <person name="Hudek A.K."/>
            <person name="Li M."/>
            <person name="Haddad M."/>
            <person name="Duggan G.E."/>
            <person name="Fernandez B.A."/>
            <person name="Kanematsu E."/>
            <person name="Gentles S."/>
            <person name="Christopoulos C.C."/>
            <person name="Choufani S."/>
            <person name="Kwasnicka D."/>
            <person name="Zheng X.H."/>
            <person name="Lai Z."/>
            <person name="Nusskern D.R."/>
            <person name="Zhang Q."/>
            <person name="Gu Z."/>
            <person name="Lu F."/>
            <person name="Zeesman S."/>
            <person name="Nowaczyk M.J."/>
            <person name="Teshima I."/>
            <person name="Chitayat D."/>
            <person name="Shuman C."/>
            <person name="Weksberg R."/>
            <person name="Zackai E.H."/>
            <person name="Grebe T.A."/>
            <person name="Cox S.R."/>
            <person name="Kirkpatrick S.J."/>
            <person name="Rahman N."/>
            <person name="Friedman J.M."/>
            <person name="Heng H.H.Q."/>
            <person name="Pelicci P.G."/>
            <person name="Lo-Coco F."/>
            <person name="Belloni E."/>
            <person name="Shaffer L.G."/>
            <person name="Pober B."/>
            <person name="Morton C.C."/>
            <person name="Gusella J.F."/>
            <person name="Bruns G.A.P."/>
            <person name="Korf B.R."/>
            <person name="Quade B.J."/>
            <person name="Ligon A.H."/>
            <person name="Ferguson H."/>
            <person name="Higgins A.W."/>
            <person name="Leach N.T."/>
            <person name="Herrick S.R."/>
            <person name="Lemyre E."/>
            <person name="Farra C.G."/>
            <person name="Kim H.-G."/>
            <person name="Summers A.M."/>
            <person name="Gripp K.W."/>
            <person name="Roberts W."/>
            <person name="Szatmari P."/>
            <person name="Winsor E.J.T."/>
            <person name="Grzeschik K.-H."/>
            <person name="Teebi A."/>
            <person name="Minassian B.A."/>
            <person name="Kere J."/>
            <person name="Armengol L."/>
            <person name="Pujana M.A."/>
            <person name="Estivill X."/>
            <person name="Wilson M.D."/>
            <person name="Koop B.F."/>
            <person name="Tosi S."/>
            <person name="Moore G.E."/>
            <person name="Boright A.P."/>
            <person name="Zlotorynski E."/>
            <person name="Kerem B."/>
            <person name="Kroisel P.M."/>
            <person name="Petek E."/>
            <person name="Oscier D.G."/>
            <person name="Mould S.J."/>
            <person name="Doehner H."/>
            <person name="Doehner K."/>
            <person name="Rommens J.M."/>
            <person name="Vincent J.B."/>
            <person name="Venter J.C."/>
            <person name="Li P.W."/>
            <person name="Mural R.J."/>
            <person name="Adams M.D."/>
            <person name="Tsui L.-C."/>
        </authorList>
    </citation>
    <scope>NUCLEOTIDE SEQUENCE [LARGE SCALE GENOMIC DNA]</scope>
</reference>
<reference key="6">
    <citation type="submission" date="2005-07" db="EMBL/GenBank/DDBJ databases">
        <authorList>
            <person name="Mural R.J."/>
            <person name="Istrail S."/>
            <person name="Sutton G.G."/>
            <person name="Florea L."/>
            <person name="Halpern A.L."/>
            <person name="Mobarry C.M."/>
            <person name="Lippert R."/>
            <person name="Walenz B."/>
            <person name="Shatkay H."/>
            <person name="Dew I."/>
            <person name="Miller J.R."/>
            <person name="Flanigan M.J."/>
            <person name="Edwards N.J."/>
            <person name="Bolanos R."/>
            <person name="Fasulo D."/>
            <person name="Halldorsson B.V."/>
            <person name="Hannenhalli S."/>
            <person name="Turner R."/>
            <person name="Yooseph S."/>
            <person name="Lu F."/>
            <person name="Nusskern D.R."/>
            <person name="Shue B.C."/>
            <person name="Zheng X.H."/>
            <person name="Zhong F."/>
            <person name="Delcher A.L."/>
            <person name="Huson D.H."/>
            <person name="Kravitz S.A."/>
            <person name="Mouchard L."/>
            <person name="Reinert K."/>
            <person name="Remington K.A."/>
            <person name="Clark A.G."/>
            <person name="Waterman M.S."/>
            <person name="Eichler E.E."/>
            <person name="Adams M.D."/>
            <person name="Hunkapiller M.W."/>
            <person name="Myers E.W."/>
            <person name="Venter J.C."/>
        </authorList>
    </citation>
    <scope>NUCLEOTIDE SEQUENCE [LARGE SCALE GENOMIC DNA]</scope>
</reference>
<reference key="7">
    <citation type="journal article" date="2004" name="Genome Res.">
        <title>The status, quality, and expansion of the NIH full-length cDNA project: the Mammalian Gene Collection (MGC).</title>
        <authorList>
            <consortium name="The MGC Project Team"/>
        </authorList>
    </citation>
    <scope>NUCLEOTIDE SEQUENCE [LARGE SCALE MRNA] (ISOFORMS 1 AND 3)</scope>
    <source>
        <tissue>Duodenum</tissue>
        <tissue>Kidney</tissue>
    </source>
</reference>
<reference key="8">
    <citation type="submission" date="2000-04" db="EMBL/GenBank/DDBJ databases">
        <title>Cloning and characterisation of the HELG gene from human chromosome 7q31.1.</title>
        <authorList>
            <person name="Tobias E.S."/>
            <person name="Hurlstone A.F.L."/>
            <person name="McFarlane R."/>
            <person name="Black D.M."/>
        </authorList>
    </citation>
    <scope>NUCLEOTIDE SEQUENCE [MRNA] OF 52-585 (ISOFORM 2)</scope>
    <source>
        <tissue>Fibroblast</tissue>
    </source>
</reference>
<reference key="9">
    <citation type="journal article" date="2002" name="Genomics">
        <title>The RAY1/ST7 tumor-suppressor locus on chromosome 7q31 represents a complex multi-transcript system.</title>
        <authorList>
            <person name="Vincent J.B."/>
            <person name="Petek E."/>
            <person name="Thevarkunnel S."/>
            <person name="Kolozsvari D."/>
            <person name="Cheung J."/>
            <person name="Patel M."/>
            <person name="Scherer S.W."/>
        </authorList>
    </citation>
    <scope>NUCLEOTIDE SEQUENCE [MRNA] OF 121-585 (ISOFORM 7)</scope>
    <scope>ALTERNATIVE SPLICING</scope>
    <scope>VARIANT VAL-361</scope>
</reference>
<reference key="10">
    <citation type="journal article" date="2007" name="BMC Genomics">
        <title>The full-ORF clone resource of the German cDNA consortium.</title>
        <authorList>
            <person name="Bechtel S."/>
            <person name="Rosenfelder H."/>
            <person name="Duda A."/>
            <person name="Schmidt C.P."/>
            <person name="Ernst U."/>
            <person name="Wellenreuther R."/>
            <person name="Mehrle A."/>
            <person name="Schuster C."/>
            <person name="Bahr A."/>
            <person name="Bloecker H."/>
            <person name="Heubner D."/>
            <person name="Hoerlein A."/>
            <person name="Michel G."/>
            <person name="Wedler H."/>
            <person name="Koehrer K."/>
            <person name="Ottenwaelder B."/>
            <person name="Poustka A."/>
            <person name="Wiemann S."/>
            <person name="Schupp I."/>
        </authorList>
    </citation>
    <scope>NUCLEOTIDE SEQUENCE [LARGE SCALE MRNA] OF 193-585 (ISOFORM 2)</scope>
    <source>
        <tissue>Melanoma</tissue>
    </source>
</reference>
<reference key="11">
    <citation type="journal article" date="2006" name="Oncogene">
        <title>ST7-mediated suppression of tumorigenicity of prostate cancer cells is characterized by remodeling of the extracellular matrix.</title>
        <authorList>
            <person name="Hooi C.S.-F."/>
            <person name="Blancher C."/>
            <person name="Qiu W."/>
            <person name="Revet I.M."/>
            <person name="Williams L.H."/>
            <person name="Ciavarella M.L."/>
            <person name="Anderson R.L."/>
            <person name="Thompson E.W."/>
            <person name="Connor A."/>
            <person name="Phillips W.A."/>
            <person name="Campbell I.G."/>
        </authorList>
    </citation>
    <scope>FUNCTION</scope>
</reference>
<reference key="12">
    <citation type="journal article" date="2008" name="Mol. Cell">
        <title>Kinase-selective enrichment enables quantitative phosphoproteomics of the kinome across the cell cycle.</title>
        <authorList>
            <person name="Daub H."/>
            <person name="Olsen J.V."/>
            <person name="Bairlein M."/>
            <person name="Gnad F."/>
            <person name="Oppermann F.S."/>
            <person name="Korner R."/>
            <person name="Greff Z."/>
            <person name="Keri G."/>
            <person name="Stemmann O."/>
            <person name="Mann M."/>
        </authorList>
    </citation>
    <scope>PHOSPHORYLATION [LARGE SCALE ANALYSIS] AT SER-386</scope>
    <scope>IDENTIFICATION BY MASS SPECTROMETRY [LARGE SCALE ANALYSIS]</scope>
    <source>
        <tissue>Cervix carcinoma</tissue>
    </source>
</reference>
<reference key="13">
    <citation type="journal article" date="2001" name="Nat. Genet.">
        <title>Mutation of the ST7 tumor suppressor gene on 7q31.1 is rare in breast, ovarian and colorectal cancers.</title>
        <authorList>
            <person name="Thomas N.A."/>
            <person name="Choong D.Y."/>
            <person name="Jokubaitis V.J."/>
            <person name="Neville P.J."/>
            <person name="Campbell I.G."/>
        </authorList>
    </citation>
    <scope>VARIANT THR-186</scope>
</reference>
<organism>
    <name type="scientific">Homo sapiens</name>
    <name type="common">Human</name>
    <dbReference type="NCBI Taxonomy" id="9606"/>
    <lineage>
        <taxon>Eukaryota</taxon>
        <taxon>Metazoa</taxon>
        <taxon>Chordata</taxon>
        <taxon>Craniata</taxon>
        <taxon>Vertebrata</taxon>
        <taxon>Euteleostomi</taxon>
        <taxon>Mammalia</taxon>
        <taxon>Eutheria</taxon>
        <taxon>Euarchontoglires</taxon>
        <taxon>Primates</taxon>
        <taxon>Haplorrhini</taxon>
        <taxon>Catarrhini</taxon>
        <taxon>Hominidae</taxon>
        <taxon>Homo</taxon>
    </lineage>
</organism>